<reference key="1">
    <citation type="journal article" date="2006" name="Proc. Natl. Acad. Sci. U.S.A.">
        <title>The partitioned Rhizobium etli genome: genetic and metabolic redundancy in seven interacting replicons.</title>
        <authorList>
            <person name="Gonzalez V."/>
            <person name="Santamaria R.I."/>
            <person name="Bustos P."/>
            <person name="Hernandez-Gonzalez I."/>
            <person name="Medrano-Soto A."/>
            <person name="Moreno-Hagelsieb G."/>
            <person name="Janga S.C."/>
            <person name="Ramirez M.A."/>
            <person name="Jimenez-Jacinto V."/>
            <person name="Collado-Vides J."/>
            <person name="Davila G."/>
        </authorList>
    </citation>
    <scope>NUCLEOTIDE SEQUENCE [LARGE SCALE GENOMIC DNA]</scope>
    <source>
        <strain>ATCC 51251 / DSM 11541 / JCM 21823 / NBRC 15573 / CFN 42</strain>
    </source>
</reference>
<dbReference type="EMBL" id="CP000133">
    <property type="protein sequence ID" value="ABC90461.1"/>
    <property type="molecule type" value="Genomic_DNA"/>
</dbReference>
<dbReference type="RefSeq" id="WP_011424974.1">
    <property type="nucleotide sequence ID" value="NC_007761.1"/>
</dbReference>
<dbReference type="SMR" id="Q2K9M5"/>
<dbReference type="GeneID" id="66145847"/>
<dbReference type="KEGG" id="ret:RHE_CH01666"/>
<dbReference type="eggNOG" id="COG0222">
    <property type="taxonomic scope" value="Bacteria"/>
</dbReference>
<dbReference type="HOGENOM" id="CLU_086499_3_0_5"/>
<dbReference type="OrthoDB" id="9811748at2"/>
<dbReference type="Proteomes" id="UP000001936">
    <property type="component" value="Chromosome"/>
</dbReference>
<dbReference type="GO" id="GO:0022625">
    <property type="term" value="C:cytosolic large ribosomal subunit"/>
    <property type="evidence" value="ECO:0007669"/>
    <property type="project" value="TreeGrafter"/>
</dbReference>
<dbReference type="GO" id="GO:0003729">
    <property type="term" value="F:mRNA binding"/>
    <property type="evidence" value="ECO:0007669"/>
    <property type="project" value="TreeGrafter"/>
</dbReference>
<dbReference type="GO" id="GO:0003735">
    <property type="term" value="F:structural constituent of ribosome"/>
    <property type="evidence" value="ECO:0007669"/>
    <property type="project" value="InterPro"/>
</dbReference>
<dbReference type="GO" id="GO:0006412">
    <property type="term" value="P:translation"/>
    <property type="evidence" value="ECO:0007669"/>
    <property type="project" value="UniProtKB-UniRule"/>
</dbReference>
<dbReference type="CDD" id="cd00387">
    <property type="entry name" value="Ribosomal_L7_L12"/>
    <property type="match status" value="1"/>
</dbReference>
<dbReference type="FunFam" id="1.20.5.710:FF:000007">
    <property type="entry name" value="50S ribosomal protein L7/L12"/>
    <property type="match status" value="1"/>
</dbReference>
<dbReference type="FunFam" id="3.30.1390.10:FF:000001">
    <property type="entry name" value="50S ribosomal protein L7/L12"/>
    <property type="match status" value="1"/>
</dbReference>
<dbReference type="Gene3D" id="3.30.1390.10">
    <property type="match status" value="1"/>
</dbReference>
<dbReference type="Gene3D" id="1.20.5.710">
    <property type="entry name" value="Single helix bin"/>
    <property type="match status" value="1"/>
</dbReference>
<dbReference type="HAMAP" id="MF_00368">
    <property type="entry name" value="Ribosomal_bL12"/>
    <property type="match status" value="1"/>
</dbReference>
<dbReference type="InterPro" id="IPR000206">
    <property type="entry name" value="Ribosomal_bL12"/>
</dbReference>
<dbReference type="InterPro" id="IPR013823">
    <property type="entry name" value="Ribosomal_bL12_C"/>
</dbReference>
<dbReference type="InterPro" id="IPR014719">
    <property type="entry name" value="Ribosomal_bL12_C/ClpS-like"/>
</dbReference>
<dbReference type="InterPro" id="IPR008932">
    <property type="entry name" value="Ribosomal_bL12_oligo"/>
</dbReference>
<dbReference type="InterPro" id="IPR036235">
    <property type="entry name" value="Ribosomal_bL12_oligo_N_sf"/>
</dbReference>
<dbReference type="NCBIfam" id="TIGR00855">
    <property type="entry name" value="L12"/>
    <property type="match status" value="1"/>
</dbReference>
<dbReference type="PANTHER" id="PTHR45987">
    <property type="entry name" value="39S RIBOSOMAL PROTEIN L12"/>
    <property type="match status" value="1"/>
</dbReference>
<dbReference type="PANTHER" id="PTHR45987:SF4">
    <property type="entry name" value="LARGE RIBOSOMAL SUBUNIT PROTEIN BL12M"/>
    <property type="match status" value="1"/>
</dbReference>
<dbReference type="Pfam" id="PF00542">
    <property type="entry name" value="Ribosomal_L12"/>
    <property type="match status" value="1"/>
</dbReference>
<dbReference type="Pfam" id="PF16320">
    <property type="entry name" value="Ribosomal_L12_N"/>
    <property type="match status" value="1"/>
</dbReference>
<dbReference type="SUPFAM" id="SSF54736">
    <property type="entry name" value="ClpS-like"/>
    <property type="match status" value="1"/>
</dbReference>
<dbReference type="SUPFAM" id="SSF48300">
    <property type="entry name" value="Ribosomal protein L7/12, oligomerisation (N-terminal) domain"/>
    <property type="match status" value="1"/>
</dbReference>
<name>RL7_RHIEC</name>
<gene>
    <name evidence="1" type="primary">rplL</name>
    <name type="ordered locus">RHE_CH01666</name>
</gene>
<feature type="chain" id="PRO_0000243479" description="Large ribosomal subunit protein bL12">
    <location>
        <begin position="1"/>
        <end position="127"/>
    </location>
</feature>
<proteinExistence type="inferred from homology"/>
<protein>
    <recommendedName>
        <fullName evidence="1">Large ribosomal subunit protein bL12</fullName>
    </recommendedName>
    <alternativeName>
        <fullName evidence="2">50S ribosomal protein L7/L12</fullName>
    </alternativeName>
</protein>
<accession>Q2K9M5</accession>
<evidence type="ECO:0000255" key="1">
    <source>
        <dbReference type="HAMAP-Rule" id="MF_00368"/>
    </source>
</evidence>
<evidence type="ECO:0000305" key="2"/>
<sequence>MADLAKIVEDLSSLTVLEAAELSKLLEEKWGVSAAAPVAVAAVGGAAGGAAAPAEEEKTEFDVILTDAGANKINVIKEVRAITGLGLKEAKDLVEGAPKAVKEGVSKAEAADIKKKLEDAGAKADVK</sequence>
<organism>
    <name type="scientific">Rhizobium etli (strain ATCC 51251 / DSM 11541 / JCM 21823 / NBRC 15573 / CFN 42)</name>
    <dbReference type="NCBI Taxonomy" id="347834"/>
    <lineage>
        <taxon>Bacteria</taxon>
        <taxon>Pseudomonadati</taxon>
        <taxon>Pseudomonadota</taxon>
        <taxon>Alphaproteobacteria</taxon>
        <taxon>Hyphomicrobiales</taxon>
        <taxon>Rhizobiaceae</taxon>
        <taxon>Rhizobium/Agrobacterium group</taxon>
        <taxon>Rhizobium</taxon>
    </lineage>
</organism>
<keyword id="KW-1185">Reference proteome</keyword>
<keyword id="KW-0687">Ribonucleoprotein</keyword>
<keyword id="KW-0689">Ribosomal protein</keyword>
<comment type="function">
    <text evidence="1">Forms part of the ribosomal stalk which helps the ribosome interact with GTP-bound translation factors. Is thus essential for accurate translation.</text>
</comment>
<comment type="subunit">
    <text evidence="1">Homodimer. Part of the ribosomal stalk of the 50S ribosomal subunit. Forms a multimeric L10(L12)X complex, where L10 forms an elongated spine to which 2 to 4 L12 dimers bind in a sequential fashion. Binds GTP-bound translation factors.</text>
</comment>
<comment type="similarity">
    <text evidence="1">Belongs to the bacterial ribosomal protein bL12 family.</text>
</comment>